<evidence type="ECO:0000255" key="1">
    <source>
        <dbReference type="HAMAP-Rule" id="MF_00388"/>
    </source>
</evidence>
<keyword id="KW-0378">Hydrolase</keyword>
<keyword id="KW-0441">Lipid A biosynthesis</keyword>
<keyword id="KW-0444">Lipid biosynthesis</keyword>
<keyword id="KW-0443">Lipid metabolism</keyword>
<keyword id="KW-0479">Metal-binding</keyword>
<keyword id="KW-1185">Reference proteome</keyword>
<keyword id="KW-0862">Zinc</keyword>
<gene>
    <name evidence="1" type="primary">lpxC</name>
    <name type="ordered locus">THEYE_A0930</name>
</gene>
<sequence>MPFQKTIKSEISLTGIGIHTGKKINLNLIPAQRDTGIVFYRKDRNFPIKAKLPFVVDTSFATTLGVDGIKIRTVEHLLATLHVFGITNVFIEIDSSEIPVMDGSAIDFTKAILKAGIAKQGKTVSLFKITKPVYYEESHSKIFAKPYRGFKITYKIFYEHPLIMEQSLSIEINEQNFLNDIAPARTFGFLKDINYLLKNGFAKGGSLDNALVLDEKGVVGGNLRFKDEFVRHKILDAIGDLSLIGYPIQGHFIIEKGGHTSHINFLRKLIETGCYELAEEPYFNFQLSAQAV</sequence>
<reference key="1">
    <citation type="submission" date="2008-08" db="EMBL/GenBank/DDBJ databases">
        <title>The complete genome sequence of Thermodesulfovibrio yellowstonii strain ATCC 51303 / DSM 11347 / YP87.</title>
        <authorList>
            <person name="Dodson R.J."/>
            <person name="Durkin A.S."/>
            <person name="Wu M."/>
            <person name="Eisen J."/>
            <person name="Sutton G."/>
        </authorList>
    </citation>
    <scope>NUCLEOTIDE SEQUENCE [LARGE SCALE GENOMIC DNA]</scope>
    <source>
        <strain>ATCC 51303 / DSM 11347 / YP87</strain>
    </source>
</reference>
<feature type="chain" id="PRO_1000122827" description="UDP-3-O-acyl-N-acetylglucosamine deacetylase">
    <location>
        <begin position="1"/>
        <end position="292"/>
    </location>
</feature>
<feature type="active site" description="Proton donor" evidence="1">
    <location>
        <position position="259"/>
    </location>
</feature>
<feature type="binding site" evidence="1">
    <location>
        <position position="76"/>
    </location>
    <ligand>
        <name>Zn(2+)</name>
        <dbReference type="ChEBI" id="CHEBI:29105"/>
    </ligand>
</feature>
<feature type="binding site" evidence="1">
    <location>
        <position position="232"/>
    </location>
    <ligand>
        <name>Zn(2+)</name>
        <dbReference type="ChEBI" id="CHEBI:29105"/>
    </ligand>
</feature>
<feature type="binding site" evidence="1">
    <location>
        <position position="236"/>
    </location>
    <ligand>
        <name>Zn(2+)</name>
        <dbReference type="ChEBI" id="CHEBI:29105"/>
    </ligand>
</feature>
<name>LPXC_THEYD</name>
<comment type="function">
    <text evidence="1">Catalyzes the hydrolysis of UDP-3-O-myristoyl-N-acetylglucosamine to form UDP-3-O-myristoylglucosamine and acetate, the committed step in lipid A biosynthesis.</text>
</comment>
<comment type="catalytic activity">
    <reaction evidence="1">
        <text>a UDP-3-O-[(3R)-3-hydroxyacyl]-N-acetyl-alpha-D-glucosamine + H2O = a UDP-3-O-[(3R)-3-hydroxyacyl]-alpha-D-glucosamine + acetate</text>
        <dbReference type="Rhea" id="RHEA:67816"/>
        <dbReference type="ChEBI" id="CHEBI:15377"/>
        <dbReference type="ChEBI" id="CHEBI:30089"/>
        <dbReference type="ChEBI" id="CHEBI:137740"/>
        <dbReference type="ChEBI" id="CHEBI:173225"/>
        <dbReference type="EC" id="3.5.1.108"/>
    </reaction>
</comment>
<comment type="cofactor">
    <cofactor evidence="1">
        <name>Zn(2+)</name>
        <dbReference type="ChEBI" id="CHEBI:29105"/>
    </cofactor>
</comment>
<comment type="pathway">
    <text evidence="1">Glycolipid biosynthesis; lipid IV(A) biosynthesis; lipid IV(A) from (3R)-3-hydroxytetradecanoyl-[acyl-carrier-protein] and UDP-N-acetyl-alpha-D-glucosamine: step 2/6.</text>
</comment>
<comment type="similarity">
    <text evidence="1">Belongs to the LpxC family.</text>
</comment>
<dbReference type="EC" id="3.5.1.108" evidence="1"/>
<dbReference type="EMBL" id="CP001147">
    <property type="protein sequence ID" value="ACI21911.1"/>
    <property type="molecule type" value="Genomic_DNA"/>
</dbReference>
<dbReference type="RefSeq" id="WP_012546610.1">
    <property type="nucleotide sequence ID" value="NC_011296.1"/>
</dbReference>
<dbReference type="RefSeq" id="YP_002248766.1">
    <property type="nucleotide sequence ID" value="NC_011296.1"/>
</dbReference>
<dbReference type="SMR" id="B5YKK1"/>
<dbReference type="FunCoup" id="B5YKK1">
    <property type="interactions" value="361"/>
</dbReference>
<dbReference type="STRING" id="289376.THEYE_A0930"/>
<dbReference type="EnsemblBacteria" id="ACI21911">
    <property type="protein sequence ID" value="ACI21911"/>
    <property type="gene ID" value="THEYE_A0930"/>
</dbReference>
<dbReference type="KEGG" id="tye:THEYE_A0930"/>
<dbReference type="PATRIC" id="fig|289376.4.peg.916"/>
<dbReference type="eggNOG" id="COG0774">
    <property type="taxonomic scope" value="Bacteria"/>
</dbReference>
<dbReference type="HOGENOM" id="CLU_046528_1_0_0"/>
<dbReference type="InParanoid" id="B5YKK1"/>
<dbReference type="OrthoDB" id="9802746at2"/>
<dbReference type="UniPathway" id="UPA00359">
    <property type="reaction ID" value="UER00478"/>
</dbReference>
<dbReference type="Proteomes" id="UP000000718">
    <property type="component" value="Chromosome"/>
</dbReference>
<dbReference type="GO" id="GO:0016020">
    <property type="term" value="C:membrane"/>
    <property type="evidence" value="ECO:0007669"/>
    <property type="project" value="GOC"/>
</dbReference>
<dbReference type="GO" id="GO:0046872">
    <property type="term" value="F:metal ion binding"/>
    <property type="evidence" value="ECO:0007669"/>
    <property type="project" value="UniProtKB-KW"/>
</dbReference>
<dbReference type="GO" id="GO:0103117">
    <property type="term" value="F:UDP-3-O-acyl-N-acetylglucosamine deacetylase activity"/>
    <property type="evidence" value="ECO:0007669"/>
    <property type="project" value="UniProtKB-UniRule"/>
</dbReference>
<dbReference type="GO" id="GO:0009245">
    <property type="term" value="P:lipid A biosynthetic process"/>
    <property type="evidence" value="ECO:0007669"/>
    <property type="project" value="UniProtKB-UniRule"/>
</dbReference>
<dbReference type="Gene3D" id="3.30.230.20">
    <property type="entry name" value="lpxc deacetylase, domain 1"/>
    <property type="match status" value="1"/>
</dbReference>
<dbReference type="Gene3D" id="3.30.1700.10">
    <property type="entry name" value="lpxc deacetylase, domain 2"/>
    <property type="match status" value="1"/>
</dbReference>
<dbReference type="HAMAP" id="MF_00388">
    <property type="entry name" value="LpxC"/>
    <property type="match status" value="1"/>
</dbReference>
<dbReference type="InterPro" id="IPR020568">
    <property type="entry name" value="Ribosomal_Su5_D2-typ_SF"/>
</dbReference>
<dbReference type="InterPro" id="IPR004463">
    <property type="entry name" value="UDP-acyl_GlcNac_deAcase"/>
</dbReference>
<dbReference type="InterPro" id="IPR011334">
    <property type="entry name" value="UDP-acyl_GlcNac_deAcase_C"/>
</dbReference>
<dbReference type="InterPro" id="IPR015870">
    <property type="entry name" value="UDP-acyl_N-AcGlcN_deAcase_N"/>
</dbReference>
<dbReference type="NCBIfam" id="TIGR00325">
    <property type="entry name" value="lpxC"/>
    <property type="match status" value="1"/>
</dbReference>
<dbReference type="PANTHER" id="PTHR33694">
    <property type="entry name" value="UDP-3-O-ACYL-N-ACETYLGLUCOSAMINE DEACETYLASE 1, MITOCHONDRIAL-RELATED"/>
    <property type="match status" value="1"/>
</dbReference>
<dbReference type="PANTHER" id="PTHR33694:SF1">
    <property type="entry name" value="UDP-3-O-ACYL-N-ACETYLGLUCOSAMINE DEACETYLASE 1, MITOCHONDRIAL-RELATED"/>
    <property type="match status" value="1"/>
</dbReference>
<dbReference type="Pfam" id="PF03331">
    <property type="entry name" value="LpxC"/>
    <property type="match status" value="1"/>
</dbReference>
<dbReference type="SUPFAM" id="SSF54211">
    <property type="entry name" value="Ribosomal protein S5 domain 2-like"/>
    <property type="match status" value="2"/>
</dbReference>
<proteinExistence type="inferred from homology"/>
<protein>
    <recommendedName>
        <fullName evidence="1">UDP-3-O-acyl-N-acetylglucosamine deacetylase</fullName>
        <shortName evidence="1">UDP-3-O-acyl-GlcNAc deacetylase</shortName>
        <ecNumber evidence="1">3.5.1.108</ecNumber>
    </recommendedName>
    <alternativeName>
        <fullName evidence="1">UDP-3-O-[R-3-hydroxymyristoyl]-N-acetylglucosamine deacetylase</fullName>
    </alternativeName>
</protein>
<accession>B5YKK1</accession>
<organism>
    <name type="scientific">Thermodesulfovibrio yellowstonii (strain ATCC 51303 / DSM 11347 / YP87)</name>
    <dbReference type="NCBI Taxonomy" id="289376"/>
    <lineage>
        <taxon>Bacteria</taxon>
        <taxon>Pseudomonadati</taxon>
        <taxon>Nitrospirota</taxon>
        <taxon>Thermodesulfovibrionia</taxon>
        <taxon>Thermodesulfovibrionales</taxon>
        <taxon>Thermodesulfovibrionaceae</taxon>
        <taxon>Thermodesulfovibrio</taxon>
    </lineage>
</organism>